<feature type="chain" id="PRO_0000183271" description="UDP-glucuronic acid decarboxylase 1">
    <location>
        <begin position="1"/>
        <end position="420"/>
    </location>
</feature>
<feature type="topological domain" description="Cytoplasmic" evidence="3">
    <location>
        <begin position="1"/>
        <end position="19"/>
    </location>
</feature>
<feature type="transmembrane region" description="Helical; Signal-anchor for type II membrane protein" evidence="3">
    <location>
        <begin position="20"/>
        <end position="40"/>
    </location>
</feature>
<feature type="topological domain" description="Lumenal" evidence="3">
    <location>
        <begin position="41"/>
        <end position="420"/>
    </location>
</feature>
<feature type="active site" description="Proton acceptor" evidence="2">
    <location>
        <position position="231"/>
    </location>
</feature>
<feature type="binding site" evidence="2">
    <location>
        <position position="98"/>
    </location>
    <ligand>
        <name>NAD(+)</name>
        <dbReference type="ChEBI" id="CHEBI:57540"/>
    </ligand>
</feature>
<feature type="binding site" evidence="2">
    <location>
        <position position="99"/>
    </location>
    <ligand>
        <name>NAD(+)</name>
        <dbReference type="ChEBI" id="CHEBI:57540"/>
    </ligand>
</feature>
<feature type="binding site" evidence="2">
    <location>
        <position position="100"/>
    </location>
    <ligand>
        <name>NAD(+)</name>
        <dbReference type="ChEBI" id="CHEBI:57540"/>
    </ligand>
</feature>
<feature type="binding site" evidence="2">
    <location>
        <position position="119"/>
    </location>
    <ligand>
        <name>NAD(+)</name>
        <dbReference type="ChEBI" id="CHEBI:57540"/>
    </ligand>
</feature>
<feature type="binding site" evidence="2">
    <location>
        <position position="120"/>
    </location>
    <ligand>
        <name>NAD(+)</name>
        <dbReference type="ChEBI" id="CHEBI:57540"/>
    </ligand>
</feature>
<feature type="binding site" evidence="2">
    <location>
        <position position="122"/>
    </location>
    <ligand>
        <name>NAD(+)</name>
        <dbReference type="ChEBI" id="CHEBI:57540"/>
    </ligand>
</feature>
<feature type="binding site" evidence="2">
    <location>
        <position position="123"/>
    </location>
    <ligand>
        <name>NAD(+)</name>
        <dbReference type="ChEBI" id="CHEBI:57540"/>
    </ligand>
</feature>
<feature type="binding site" evidence="2">
    <location>
        <position position="124"/>
    </location>
    <ligand>
        <name>NAD(+)</name>
        <dbReference type="ChEBI" id="CHEBI:57540"/>
    </ligand>
</feature>
<feature type="binding site" evidence="2">
    <location>
        <position position="144"/>
    </location>
    <ligand>
        <name>NAD(+)</name>
        <dbReference type="ChEBI" id="CHEBI:57540"/>
    </ligand>
</feature>
<feature type="binding site" evidence="2">
    <location>
        <position position="145"/>
    </location>
    <ligand>
        <name>NAD(+)</name>
        <dbReference type="ChEBI" id="CHEBI:57540"/>
    </ligand>
</feature>
<feature type="binding site" evidence="2">
    <location>
        <position position="149"/>
    </location>
    <ligand>
        <name>UDP-alpha-D-glucuronate</name>
        <dbReference type="ChEBI" id="CHEBI:58052"/>
    </ligand>
</feature>
<feature type="binding site" evidence="2">
    <location>
        <position position="150"/>
    </location>
    <ligand>
        <name>UDP-alpha-D-glucuronate</name>
        <dbReference type="ChEBI" id="CHEBI:58052"/>
    </ligand>
</feature>
<feature type="binding site" evidence="2">
    <location>
        <position position="159"/>
    </location>
    <ligand>
        <name>NAD(+)</name>
        <dbReference type="ChEBI" id="CHEBI:57540"/>
    </ligand>
</feature>
<feature type="binding site" evidence="2">
    <location>
        <position position="161"/>
    </location>
    <ligand>
        <name>NAD(+)</name>
        <dbReference type="ChEBI" id="CHEBI:57540"/>
    </ligand>
</feature>
<feature type="binding site" evidence="2">
    <location>
        <position position="177"/>
    </location>
    <ligand>
        <name>UDP-alpha-D-glucuronate</name>
        <dbReference type="ChEBI" id="CHEBI:58052"/>
    </ligand>
</feature>
<feature type="binding site" evidence="2">
    <location>
        <position position="178"/>
    </location>
    <ligand>
        <name>NAD(+)</name>
        <dbReference type="ChEBI" id="CHEBI:57540"/>
    </ligand>
</feature>
<feature type="binding site" evidence="2">
    <location>
        <position position="185"/>
    </location>
    <ligand>
        <name>UDP-alpha-D-glucuronate</name>
        <dbReference type="ChEBI" id="CHEBI:58052"/>
    </ligand>
</feature>
<feature type="binding site" evidence="2">
    <location>
        <position position="188"/>
    </location>
    <ligand>
        <name>UDP-alpha-D-glucuronate</name>
        <dbReference type="ChEBI" id="CHEBI:58052"/>
    </ligand>
</feature>
<feature type="binding site" evidence="2">
    <location>
        <position position="191"/>
    </location>
    <ligand>
        <name>UDP-alpha-D-glucuronate</name>
        <dbReference type="ChEBI" id="CHEBI:58052"/>
    </ligand>
</feature>
<feature type="binding site" evidence="2">
    <location>
        <position position="192"/>
    </location>
    <ligand>
        <name>UDP-alpha-D-glucuronate</name>
        <dbReference type="ChEBI" id="CHEBI:58052"/>
    </ligand>
</feature>
<feature type="binding site" evidence="2">
    <location>
        <position position="200"/>
    </location>
    <ligand>
        <name>NAD(+)</name>
        <dbReference type="ChEBI" id="CHEBI:57540"/>
    </ligand>
</feature>
<feature type="binding site" evidence="2">
    <location>
        <position position="231"/>
    </location>
    <ligand>
        <name>NAD(+)</name>
        <dbReference type="ChEBI" id="CHEBI:57540"/>
    </ligand>
</feature>
<feature type="binding site" evidence="2">
    <location>
        <position position="235"/>
    </location>
    <ligand>
        <name>NAD(+)</name>
        <dbReference type="ChEBI" id="CHEBI:57540"/>
    </ligand>
</feature>
<feature type="binding site" evidence="2">
    <location>
        <position position="245"/>
    </location>
    <ligand>
        <name>UDP-alpha-D-glucuronate</name>
        <dbReference type="ChEBI" id="CHEBI:58052"/>
    </ligand>
</feature>
<feature type="binding site" evidence="2">
    <location>
        <position position="248"/>
    </location>
    <ligand>
        <name>UDP-alpha-D-glucuronate</name>
        <dbReference type="ChEBI" id="CHEBI:58052"/>
    </ligand>
</feature>
<feature type="binding site" evidence="2">
    <location>
        <position position="249"/>
    </location>
    <ligand>
        <name>UDP-alpha-D-glucuronate</name>
        <dbReference type="ChEBI" id="CHEBI:58052"/>
    </ligand>
</feature>
<feature type="binding site" evidence="2">
    <location>
        <position position="261"/>
    </location>
    <ligand>
        <name>NAD(+)</name>
        <dbReference type="ChEBI" id="CHEBI:57540"/>
    </ligand>
</feature>
<feature type="binding site" evidence="2">
    <location>
        <position position="267"/>
    </location>
    <ligand>
        <name>NAD(+)</name>
        <dbReference type="ChEBI" id="CHEBI:57540"/>
    </ligand>
</feature>
<feature type="binding site" evidence="2">
    <location>
        <position position="272"/>
    </location>
    <ligand>
        <name>NAD(+)</name>
        <dbReference type="ChEBI" id="CHEBI:57540"/>
    </ligand>
</feature>
<feature type="modified residue" description="N-acetylmethionine" evidence="2">
    <location>
        <position position="1"/>
    </location>
</feature>
<feature type="modified residue" description="Phosphothreonine" evidence="2">
    <location>
        <position position="94"/>
    </location>
</feature>
<feature type="glycosylation site" description="N-linked (GlcNAc...) asparagine" evidence="3">
    <location>
        <position position="316"/>
    </location>
</feature>
<organism>
    <name type="scientific">Pongo abelii</name>
    <name type="common">Sumatran orangutan</name>
    <name type="synonym">Pongo pygmaeus abelii</name>
    <dbReference type="NCBI Taxonomy" id="9601"/>
    <lineage>
        <taxon>Eukaryota</taxon>
        <taxon>Metazoa</taxon>
        <taxon>Chordata</taxon>
        <taxon>Craniata</taxon>
        <taxon>Vertebrata</taxon>
        <taxon>Euteleostomi</taxon>
        <taxon>Mammalia</taxon>
        <taxon>Eutheria</taxon>
        <taxon>Euarchontoglires</taxon>
        <taxon>Primates</taxon>
        <taxon>Haplorrhini</taxon>
        <taxon>Catarrhini</taxon>
        <taxon>Hominidae</taxon>
        <taxon>Pongo</taxon>
    </lineage>
</organism>
<sequence>MVSKALLRLVSAVNRRRMKLLLGIALLAYVASVWGNFVNMRSIQENGELKIESKIEEMVEPLREKIRDLEKSFTQKYPPVKFLSEKDRKRILITGGAGFVGSHLTDKLMMDGHEVTVVDNFFTGRKRNVEHWIGHENFELINHDVVEPLYIEVDQIYHLASPASPPNYMYNPIKTLKTNTIGTLNMLGLAKRVGARLLLASTSEVYGDPEVHPQSEDYWGHVNPIGPRACYDEGKRVAETMCYAYMKQEGVEVRVARIFNTFGPRMHMNDGRVVSNFILQALQGEPLTVYGSGSQTRAFQYVSDLVNGLVALMNSNVSSPVNLGNPEEHTILEFAQLIKNLVGSGSEIQFLSEAQDDPQKRKPDIKKAKLMLGWEPVVPLEEGLNKAIHYFRKELEYQANNQYIPKPKPARIKKGRTRHN</sequence>
<gene>
    <name type="primary">UXS1</name>
</gene>
<dbReference type="EC" id="4.1.1.35" evidence="2"/>
<dbReference type="EMBL" id="CR859869">
    <property type="protein sequence ID" value="CAH92025.1"/>
    <property type="molecule type" value="mRNA"/>
</dbReference>
<dbReference type="RefSeq" id="NP_001126176.1">
    <property type="nucleotide sequence ID" value="NM_001132704.1"/>
</dbReference>
<dbReference type="RefSeq" id="XP_009235107.1">
    <property type="nucleotide sequence ID" value="XM_009236832.1"/>
</dbReference>
<dbReference type="SMR" id="Q5R885"/>
<dbReference type="FunCoup" id="Q5R885">
    <property type="interactions" value="826"/>
</dbReference>
<dbReference type="STRING" id="9601.ENSPPYP00000013525"/>
<dbReference type="GlyCosmos" id="Q5R885">
    <property type="glycosylation" value="1 site, No reported glycans"/>
</dbReference>
<dbReference type="GeneID" id="100173139"/>
<dbReference type="KEGG" id="pon:100173139"/>
<dbReference type="CTD" id="80146"/>
<dbReference type="eggNOG" id="KOG1429">
    <property type="taxonomic scope" value="Eukaryota"/>
</dbReference>
<dbReference type="HOGENOM" id="CLU_007383_4_3_1"/>
<dbReference type="InParanoid" id="Q5R885"/>
<dbReference type="OrthoDB" id="331544at2759"/>
<dbReference type="UniPathway" id="UPA00796">
    <property type="reaction ID" value="UER00771"/>
</dbReference>
<dbReference type="Proteomes" id="UP000001595">
    <property type="component" value="Unplaced"/>
</dbReference>
<dbReference type="GO" id="GO:0032580">
    <property type="term" value="C:Golgi cisterna membrane"/>
    <property type="evidence" value="ECO:0007669"/>
    <property type="project" value="UniProtKB-SubCell"/>
</dbReference>
<dbReference type="GO" id="GO:0070403">
    <property type="term" value="F:NAD+ binding"/>
    <property type="evidence" value="ECO:0007669"/>
    <property type="project" value="InterPro"/>
</dbReference>
<dbReference type="GO" id="GO:0048040">
    <property type="term" value="F:UDP-glucuronate decarboxylase activity"/>
    <property type="evidence" value="ECO:0007669"/>
    <property type="project" value="UniProtKB-EC"/>
</dbReference>
<dbReference type="GO" id="GO:0042732">
    <property type="term" value="P:D-xylose metabolic process"/>
    <property type="evidence" value="ECO:0007669"/>
    <property type="project" value="InterPro"/>
</dbReference>
<dbReference type="GO" id="GO:0033320">
    <property type="term" value="P:UDP-D-xylose biosynthetic process"/>
    <property type="evidence" value="ECO:0007669"/>
    <property type="project" value="UniProtKB-UniPathway"/>
</dbReference>
<dbReference type="CDD" id="cd05230">
    <property type="entry name" value="UGD_SDR_e"/>
    <property type="match status" value="1"/>
</dbReference>
<dbReference type="FunFam" id="3.40.50.720:FF:000065">
    <property type="entry name" value="UDP-glucuronic acid decarboxylase 1"/>
    <property type="match status" value="1"/>
</dbReference>
<dbReference type="Gene3D" id="3.40.50.720">
    <property type="entry name" value="NAD(P)-binding Rossmann-like Domain"/>
    <property type="match status" value="2"/>
</dbReference>
<dbReference type="InterPro" id="IPR016040">
    <property type="entry name" value="NAD(P)-bd_dom"/>
</dbReference>
<dbReference type="InterPro" id="IPR036291">
    <property type="entry name" value="NAD(P)-bd_dom_sf"/>
</dbReference>
<dbReference type="InterPro" id="IPR044516">
    <property type="entry name" value="UXS-like"/>
</dbReference>
<dbReference type="InterPro" id="IPR021761">
    <property type="entry name" value="UXS1_N"/>
</dbReference>
<dbReference type="PANTHER" id="PTHR43078:SF6">
    <property type="entry name" value="UDP-GLUCURONIC ACID DECARBOXYLASE 1"/>
    <property type="match status" value="1"/>
</dbReference>
<dbReference type="PANTHER" id="PTHR43078">
    <property type="entry name" value="UDP-GLUCURONIC ACID DECARBOXYLASE-RELATED"/>
    <property type="match status" value="1"/>
</dbReference>
<dbReference type="Pfam" id="PF16363">
    <property type="entry name" value="GDP_Man_Dehyd"/>
    <property type="match status" value="1"/>
</dbReference>
<dbReference type="Pfam" id="PF11803">
    <property type="entry name" value="UXS1_N"/>
    <property type="match status" value="1"/>
</dbReference>
<dbReference type="SUPFAM" id="SSF51735">
    <property type="entry name" value="NAD(P)-binding Rossmann-fold domains"/>
    <property type="match status" value="1"/>
</dbReference>
<proteinExistence type="evidence at transcript level"/>
<keyword id="KW-0007">Acetylation</keyword>
<keyword id="KW-0210">Decarboxylase</keyword>
<keyword id="KW-0325">Glycoprotein</keyword>
<keyword id="KW-0333">Golgi apparatus</keyword>
<keyword id="KW-0456">Lyase</keyword>
<keyword id="KW-0472">Membrane</keyword>
<keyword id="KW-0520">NAD</keyword>
<keyword id="KW-0597">Phosphoprotein</keyword>
<keyword id="KW-1185">Reference proteome</keyword>
<keyword id="KW-0735">Signal-anchor</keyword>
<keyword id="KW-0812">Transmembrane</keyword>
<keyword id="KW-1133">Transmembrane helix</keyword>
<accession>Q5R885</accession>
<reference key="1">
    <citation type="submission" date="2004-11" db="EMBL/GenBank/DDBJ databases">
        <authorList>
            <consortium name="The German cDNA consortium"/>
        </authorList>
    </citation>
    <scope>NUCLEOTIDE SEQUENCE [LARGE SCALE MRNA]</scope>
    <source>
        <tissue>Kidney</tissue>
    </source>
</reference>
<evidence type="ECO:0000250" key="1">
    <source>
        <dbReference type="UniProtKB" id="Q5PQX0"/>
    </source>
</evidence>
<evidence type="ECO:0000250" key="2">
    <source>
        <dbReference type="UniProtKB" id="Q8NBZ7"/>
    </source>
</evidence>
<evidence type="ECO:0000255" key="3"/>
<evidence type="ECO:0000305" key="4"/>
<name>UXS1_PONAB</name>
<protein>
    <recommendedName>
        <fullName evidence="4">UDP-glucuronic acid decarboxylase 1</fullName>
        <ecNumber evidence="2">4.1.1.35</ecNumber>
    </recommendedName>
    <alternativeName>
        <fullName>UDP-glucuronate decarboxylase 1</fullName>
        <shortName>UGD</shortName>
        <shortName>UXS-1</shortName>
    </alternativeName>
</protein>
<comment type="function">
    <text evidence="2">Catalyzes the NAD-dependent decarboxylation of UDP-glucuronic acid to UDP-xylose. Necessary for the biosynthesis of the core tetrasaccharide in glycosaminoglycan biosynthesis.</text>
</comment>
<comment type="catalytic activity">
    <reaction evidence="2">
        <text>UDP-alpha-D-glucuronate + H(+) = UDP-alpha-D-xylose + CO2</text>
        <dbReference type="Rhea" id="RHEA:23916"/>
        <dbReference type="ChEBI" id="CHEBI:15378"/>
        <dbReference type="ChEBI" id="CHEBI:16526"/>
        <dbReference type="ChEBI" id="CHEBI:57632"/>
        <dbReference type="ChEBI" id="CHEBI:58052"/>
        <dbReference type="EC" id="4.1.1.35"/>
    </reaction>
    <physiologicalReaction direction="left-to-right" evidence="2">
        <dbReference type="Rhea" id="RHEA:23917"/>
    </physiologicalReaction>
</comment>
<comment type="cofactor">
    <cofactor evidence="2">
        <name>NAD(+)</name>
        <dbReference type="ChEBI" id="CHEBI:57540"/>
    </cofactor>
</comment>
<comment type="pathway">
    <text evidence="2">Nucleotide-sugar biosynthesis; UDP-alpha-D-xylose biosynthesis; UDP-alpha-D-xylose from UDP-alpha-D-glucuronate: step 1/1.</text>
</comment>
<comment type="subunit">
    <text evidence="1 2">Homodimer and homotetramer (By similarity). Interacts with AKT1 (By similarity).</text>
</comment>
<comment type="subcellular location">
    <subcellularLocation>
        <location evidence="1">Golgi apparatus</location>
        <location evidence="1">Golgi stack membrane</location>
        <topology evidence="2">Single-pass type II membrane protein</topology>
    </subcellularLocation>
</comment>
<comment type="similarity">
    <text evidence="4">Belongs to the NAD(P)-dependent epimerase/dehydratase family. UDP-glucuronic acid decarboxylase subfamily.</text>
</comment>